<organism>
    <name type="scientific">Streptococcus agalactiae</name>
    <dbReference type="NCBI Taxonomy" id="1311"/>
    <lineage>
        <taxon>Bacteria</taxon>
        <taxon>Bacillati</taxon>
        <taxon>Bacillota</taxon>
        <taxon>Bacilli</taxon>
        <taxon>Lactobacillales</taxon>
        <taxon>Streptococcaceae</taxon>
        <taxon>Streptococcus</taxon>
    </lineage>
</organism>
<name>ZTOX_STRAG</name>
<comment type="function">
    <text evidence="1">Toxic component of a type II toxin-antitoxin (TA) system. Phosphorylates UDP-N-acetyl-D-glucosamine (UNAG) on the 3'-hydroxyl group of the N-acetyl-D-glucosamine moiety, yielding UNAG-3P. UNAG-3P inhibits MurA, the first committed step in cell wall synthesis, which is then blocked. Phosphorylation is inhibited by cognate epsilon antitoxin. Part of a postsegregational killing (PSK) system involved in the killing of plasmid-free cells. The zeta toxin induces programmed cell death (By similarity).</text>
</comment>
<comment type="catalytic activity">
    <reaction>
        <text>UDP-N-acetyl-alpha-D-glucosamine + ATP = UDP-N-acetyl-alpha-D-glucosamine 3'-phosphate + ADP + H(+)</text>
        <dbReference type="Rhea" id="RHEA:32671"/>
        <dbReference type="ChEBI" id="CHEBI:15378"/>
        <dbReference type="ChEBI" id="CHEBI:30616"/>
        <dbReference type="ChEBI" id="CHEBI:57705"/>
        <dbReference type="ChEBI" id="CHEBI:64353"/>
        <dbReference type="ChEBI" id="CHEBI:456216"/>
        <dbReference type="EC" id="2.7.1.176"/>
    </reaction>
</comment>
<comment type="subunit">
    <text evidence="1">In the presence of the epsilon antitoxin, forms an inactive PezA(2)PezT(2) heterotetramer.</text>
</comment>
<comment type="similarity">
    <text evidence="4">Belongs to the zeta toxin family.</text>
</comment>
<evidence type="ECO:0000250" key="1"/>
<evidence type="ECO:0000250" key="2">
    <source>
        <dbReference type="UniProtKB" id="Q97QZ1"/>
    </source>
</evidence>
<evidence type="ECO:0000256" key="3">
    <source>
        <dbReference type="SAM" id="MobiDB-lite"/>
    </source>
</evidence>
<evidence type="ECO:0000305" key="4"/>
<dbReference type="EC" id="2.7.1.176"/>
<dbReference type="EMBL" id="AJ301605">
    <property type="protein sequence ID" value="CAC70737.1"/>
    <property type="molecule type" value="Genomic_DNA"/>
</dbReference>
<dbReference type="RefSeq" id="WP_002332783.1">
    <property type="nucleotide sequence ID" value="NZ_WNJB01000003.1"/>
</dbReference>
<dbReference type="SMR" id="P0A4M2"/>
<dbReference type="GeneID" id="86911084"/>
<dbReference type="GO" id="GO:0005524">
    <property type="term" value="F:ATP binding"/>
    <property type="evidence" value="ECO:0007669"/>
    <property type="project" value="UniProtKB-KW"/>
</dbReference>
<dbReference type="GO" id="GO:0016301">
    <property type="term" value="F:kinase activity"/>
    <property type="evidence" value="ECO:0007669"/>
    <property type="project" value="UniProtKB-KW"/>
</dbReference>
<dbReference type="Gene3D" id="3.40.50.300">
    <property type="entry name" value="P-loop containing nucleotide triphosphate hydrolases"/>
    <property type="match status" value="1"/>
</dbReference>
<dbReference type="InterPro" id="IPR027417">
    <property type="entry name" value="P-loop_NTPase"/>
</dbReference>
<dbReference type="InterPro" id="IPR010488">
    <property type="entry name" value="Zeta_toxin_domain"/>
</dbReference>
<dbReference type="Pfam" id="PF06414">
    <property type="entry name" value="Zeta_toxin"/>
    <property type="match status" value="1"/>
</dbReference>
<dbReference type="SUPFAM" id="SSF52540">
    <property type="entry name" value="P-loop containing nucleoside triphosphate hydrolases"/>
    <property type="match status" value="1"/>
</dbReference>
<accession>P0A4M2</accession>
<accession>Q9AL18</accession>
<feature type="chain" id="PRO_0000221553" description="Toxin zeta">
    <location>
        <begin position="1"/>
        <end position="287"/>
    </location>
</feature>
<feature type="region of interest" description="Disordered" evidence="3">
    <location>
        <begin position="250"/>
        <end position="287"/>
    </location>
</feature>
<feature type="compositionally biased region" description="Pro residues" evidence="3">
    <location>
        <begin position="273"/>
        <end position="287"/>
    </location>
</feature>
<feature type="binding site" evidence="2">
    <location>
        <begin position="40"/>
        <end position="47"/>
    </location>
    <ligand>
        <name>ATP</name>
        <dbReference type="ChEBI" id="CHEBI:30616"/>
    </ligand>
</feature>
<sequence>MANITDFTEKQFEDRLEKNVERLTKNRLAVESPTAFLLGGQPGSGKTSLRSAISEETQGNVVIIDNDTFKQQHPNFDELVKLYEKDVVKYVTPYSNRMTEAIISRLRDKGYNLVIEGTGRTTDVPIQTATMLQAKDYETKMYVMAVPKINSYLGTIERYETMYADDPMTARATPKQAHDIVVKNLPTNLETLHKTGLFSDIRLYNREGVKLYSSLETPSISPKETLERELNRKVSGKEIQPTLERIEQKMVQNQHQETPEFKAIQQKMESLQPPTPPIPKTPKLPGI</sequence>
<protein>
    <recommendedName>
        <fullName>Toxin zeta</fullName>
    </recommendedName>
    <alternativeName>
        <fullName>UDP-N-acetylglucosamine kinase</fullName>
        <shortName>UNAG kinase</shortName>
        <ecNumber>2.7.1.176</ecNumber>
    </alternativeName>
</protein>
<proteinExistence type="inferred from homology"/>
<keyword id="KW-0067">ATP-binding</keyword>
<keyword id="KW-0418">Kinase</keyword>
<keyword id="KW-0547">Nucleotide-binding</keyword>
<keyword id="KW-0614">Plasmid</keyword>
<keyword id="KW-1277">Toxin-antitoxin system</keyword>
<keyword id="KW-0808">Transferase</keyword>
<geneLocation type="plasmid">
    <name>pIP501</name>
</geneLocation>
<reference key="1">
    <citation type="submission" date="2001-08" db="EMBL/GenBank/DDBJ databases">
        <title>Lactobacillus helveticus ATCC15009 as a host for native and conjugative plasmid DNA.</title>
        <authorList>
            <person name="Thompson J.K."/>
            <person name="Collins M.A."/>
            <person name="Foley S."/>
        </authorList>
    </citation>
    <scope>NUCLEOTIDE SEQUENCE [GENOMIC DNA]</scope>
</reference>